<protein>
    <recommendedName>
        <fullName>Nitrogenase iron protein</fullName>
        <ecNumber>1.18.6.1</ecNumber>
    </recommendedName>
    <alternativeName>
        <fullName>Nitrogenase Fe protein</fullName>
    </alternativeName>
    <alternativeName>
        <fullName>Nitrogenase component II</fullName>
    </alternativeName>
    <alternativeName>
        <fullName>Nitrogenase reductase</fullName>
    </alternativeName>
</protein>
<comment type="function">
    <text evidence="1">The key enzymatic reactions in nitrogen fixation are catalyzed by the nitrogenase complex, which has 2 components: the iron protein and the molybdenum-iron protein.</text>
</comment>
<comment type="catalytic activity">
    <reaction>
        <text>N2 + 8 reduced [2Fe-2S]-[ferredoxin] + 16 ATP + 16 H2O = H2 + 8 oxidized [2Fe-2S]-[ferredoxin] + 2 NH4(+) + 16 ADP + 16 phosphate + 6 H(+)</text>
        <dbReference type="Rhea" id="RHEA:21448"/>
        <dbReference type="Rhea" id="RHEA-COMP:10000"/>
        <dbReference type="Rhea" id="RHEA-COMP:10001"/>
        <dbReference type="ChEBI" id="CHEBI:15377"/>
        <dbReference type="ChEBI" id="CHEBI:15378"/>
        <dbReference type="ChEBI" id="CHEBI:17997"/>
        <dbReference type="ChEBI" id="CHEBI:18276"/>
        <dbReference type="ChEBI" id="CHEBI:28938"/>
        <dbReference type="ChEBI" id="CHEBI:30616"/>
        <dbReference type="ChEBI" id="CHEBI:33737"/>
        <dbReference type="ChEBI" id="CHEBI:33738"/>
        <dbReference type="ChEBI" id="CHEBI:43474"/>
        <dbReference type="ChEBI" id="CHEBI:456216"/>
        <dbReference type="EC" id="1.18.6.1"/>
    </reaction>
</comment>
<comment type="cofactor">
    <cofactor evidence="1">
        <name>[4Fe-4S] cluster</name>
        <dbReference type="ChEBI" id="CHEBI:49883"/>
    </cofactor>
    <text evidence="1">Binds 1 [4Fe-4S] cluster per dimer.</text>
</comment>
<comment type="subunit">
    <text evidence="1">Homodimer.</text>
</comment>
<comment type="PTM">
    <text evidence="1">The reversible ADP-ribosylation of Arg-97 inactivates the nitrogenase reductase and regulates nitrogenase activity.</text>
</comment>
<comment type="similarity">
    <text evidence="3">Belongs to the NifH/BchL/ChlL family.</text>
</comment>
<comment type="sequence caution" evidence="3">
    <conflict type="frameshift">
        <sequence resource="EMBL-CDS" id="AAB63257"/>
    </conflict>
</comment>
<sequence length="271" mass="29199">MRQVAIYGKGGIGKSTTTQNLTAGLGEMGKKIMIVGCDPKADSTRLVLGGLAQKTVLDTLREEGEDIELDTVLKVGYAGIKGVESGGPEPGVGCAGRGIITSIGLLERLGAYEADLDYVFYDVLGDVVCGGFAMPIREGKAQEIYIVCSAEMMGLYAANNIAKGISKYANTGGVRLGGLICNSRKVDGEADLVSRVAKEIGTQMIHFVPATMRCRRRKSIKRQLSTFRPMTQADEYRTLARKIDGNDMFVVPRPMSIDRLEAILMEHGILD</sequence>
<keyword id="KW-0004">4Fe-4S</keyword>
<keyword id="KW-0013">ADP-ribosylation</keyword>
<keyword id="KW-0067">ATP-binding</keyword>
<keyword id="KW-0408">Iron</keyword>
<keyword id="KW-0411">Iron-sulfur</keyword>
<keyword id="KW-0479">Metal-binding</keyword>
<keyword id="KW-0535">Nitrogen fixation</keyword>
<keyword id="KW-0547">Nucleotide-binding</keyword>
<keyword id="KW-0560">Oxidoreductase</keyword>
<proteinExistence type="inferred from homology"/>
<dbReference type="EC" id="1.18.6.1"/>
<dbReference type="EMBL" id="U59414">
    <property type="protein sequence ID" value="AAB63257.1"/>
    <property type="status" value="ALT_FRAME"/>
    <property type="molecule type" value="Genomic_DNA"/>
</dbReference>
<dbReference type="SMR" id="Q59270"/>
<dbReference type="GO" id="GO:0051539">
    <property type="term" value="F:4 iron, 4 sulfur cluster binding"/>
    <property type="evidence" value="ECO:0007669"/>
    <property type="project" value="UniProtKB-KW"/>
</dbReference>
<dbReference type="GO" id="GO:0005524">
    <property type="term" value="F:ATP binding"/>
    <property type="evidence" value="ECO:0007669"/>
    <property type="project" value="UniProtKB-UniRule"/>
</dbReference>
<dbReference type="GO" id="GO:0046872">
    <property type="term" value="F:metal ion binding"/>
    <property type="evidence" value="ECO:0007669"/>
    <property type="project" value="UniProtKB-KW"/>
</dbReference>
<dbReference type="GO" id="GO:0016163">
    <property type="term" value="F:nitrogenase activity"/>
    <property type="evidence" value="ECO:0007669"/>
    <property type="project" value="UniProtKB-UniRule"/>
</dbReference>
<dbReference type="GO" id="GO:0009399">
    <property type="term" value="P:nitrogen fixation"/>
    <property type="evidence" value="ECO:0007669"/>
    <property type="project" value="UniProtKB-UniRule"/>
</dbReference>
<dbReference type="CDD" id="cd02040">
    <property type="entry name" value="NifH"/>
    <property type="match status" value="1"/>
</dbReference>
<dbReference type="Gene3D" id="3.40.50.300">
    <property type="entry name" value="P-loop containing nucleotide triphosphate hydrolases"/>
    <property type="match status" value="1"/>
</dbReference>
<dbReference type="HAMAP" id="MF_00533">
    <property type="entry name" value="NifH"/>
    <property type="match status" value="1"/>
</dbReference>
<dbReference type="InterPro" id="IPR030655">
    <property type="entry name" value="NifH/chlL_CS"/>
</dbReference>
<dbReference type="InterPro" id="IPR000392">
    <property type="entry name" value="NifH/frxC"/>
</dbReference>
<dbReference type="InterPro" id="IPR005977">
    <property type="entry name" value="Nitrogenase_Fe_NifH"/>
</dbReference>
<dbReference type="InterPro" id="IPR027417">
    <property type="entry name" value="P-loop_NTPase"/>
</dbReference>
<dbReference type="NCBIfam" id="TIGR01287">
    <property type="entry name" value="nifH"/>
    <property type="match status" value="1"/>
</dbReference>
<dbReference type="PANTHER" id="PTHR42864">
    <property type="entry name" value="LIGHT-INDEPENDENT PROTOCHLOROPHYLLIDE REDUCTASE IRON-SULFUR ATP-BINDING PROTEIN"/>
    <property type="match status" value="1"/>
</dbReference>
<dbReference type="PANTHER" id="PTHR42864:SF2">
    <property type="entry name" value="LIGHT-INDEPENDENT PROTOCHLOROPHYLLIDE REDUCTASE IRON-SULFUR ATP-BINDING PROTEIN"/>
    <property type="match status" value="1"/>
</dbReference>
<dbReference type="Pfam" id="PF00142">
    <property type="entry name" value="Fer4_NifH"/>
    <property type="match status" value="1"/>
</dbReference>
<dbReference type="PIRSF" id="PIRSF000363">
    <property type="entry name" value="Nitrogenase_iron"/>
    <property type="match status" value="1"/>
</dbReference>
<dbReference type="PRINTS" id="PR00091">
    <property type="entry name" value="NITROGNASEII"/>
</dbReference>
<dbReference type="SUPFAM" id="SSF52540">
    <property type="entry name" value="P-loop containing nucleoside triphosphate hydrolases"/>
    <property type="match status" value="1"/>
</dbReference>
<dbReference type="PROSITE" id="PS00746">
    <property type="entry name" value="NIFH_FRXC_1"/>
    <property type="match status" value="1"/>
</dbReference>
<dbReference type="PROSITE" id="PS00692">
    <property type="entry name" value="NIFH_FRXC_2"/>
    <property type="match status" value="1"/>
</dbReference>
<dbReference type="PROSITE" id="PS51026">
    <property type="entry name" value="NIFH_FRXC_3"/>
    <property type="match status" value="1"/>
</dbReference>
<name>NIFH_RUMCE</name>
<evidence type="ECO:0000250" key="1"/>
<evidence type="ECO:0000255" key="2"/>
<evidence type="ECO:0000305" key="3"/>
<organism>
    <name type="scientific">Ruminiclostridium cellobioparum</name>
    <name type="common">Clostridium cellobioparum</name>
    <dbReference type="NCBI Taxonomy" id="29355"/>
    <lineage>
        <taxon>Bacteria</taxon>
        <taxon>Bacillati</taxon>
        <taxon>Bacillota</taxon>
        <taxon>Clostridia</taxon>
        <taxon>Eubacteriales</taxon>
        <taxon>Oscillospiraceae</taxon>
        <taxon>Ruminiclostridium</taxon>
    </lineage>
</organism>
<gene>
    <name type="primary">nifH</name>
</gene>
<reference key="1">
    <citation type="submission" date="1996-06" db="EMBL/GenBank/DDBJ databases">
        <title>Cloning of two potential nif genes from cellulolytic clostridia.</title>
        <authorList>
            <person name="Chen T."/>
            <person name="Leschine S.B."/>
        </authorList>
    </citation>
    <scope>NUCLEOTIDE SEQUENCE [GENOMIC DNA]</scope>
    <source>
        <strain>ATCC 15832 / DSM 1351 / BCRC 14495 / JCM 1422 / NCIMB 10669 / VPI 3359 / Cc</strain>
    </source>
</reference>
<accession>Q59270</accession>
<feature type="chain" id="PRO_0000139497" description="Nitrogenase iron protein">
    <location>
        <begin position="1"/>
        <end position="271"/>
    </location>
</feature>
<feature type="binding site" evidence="2">
    <location>
        <begin position="8"/>
        <end position="15"/>
    </location>
    <ligand>
        <name>ATP</name>
        <dbReference type="ChEBI" id="CHEBI:30616"/>
    </ligand>
</feature>
<feature type="binding site" evidence="1">
    <location>
        <position position="94"/>
    </location>
    <ligand>
        <name>[4Fe-4S] cluster</name>
        <dbReference type="ChEBI" id="CHEBI:49883"/>
        <note>ligand shared between dimeric partners</note>
    </ligand>
</feature>
<feature type="binding site" evidence="1">
    <location>
        <position position="129"/>
    </location>
    <ligand>
        <name>[4Fe-4S] cluster</name>
        <dbReference type="ChEBI" id="CHEBI:49883"/>
        <note>ligand shared between dimeric partners</note>
    </ligand>
</feature>
<feature type="modified residue" description="ADP-ribosylarginine; by dinitrogenase reductase ADP-ribosyltransferase" evidence="1">
    <location>
        <position position="97"/>
    </location>
</feature>